<evidence type="ECO:0000305" key="1">
    <source>
    </source>
</evidence>
<sequence length="57" mass="7035">MKSQKIHNQKDREKVEIYFYLKILINISTIHVITDYYFYLCQRWLARGCCEVTSKRF</sequence>
<feature type="chain" id="PRO_0000202724" description="Putative uncharacterized protein YGL188C">
    <location>
        <begin position="1"/>
        <end position="57"/>
    </location>
</feature>
<name>YGT8_YEAST</name>
<proteinExistence type="uncertain"/>
<dbReference type="EMBL" id="X01418">
    <property type="protein sequence ID" value="CAA25666.1"/>
    <property type="molecule type" value="Genomic_DNA"/>
</dbReference>
<dbReference type="EMBL" id="Z72710">
    <property type="protein sequence ID" value="CAA96900.1"/>
    <property type="molecule type" value="Genomic_DNA"/>
</dbReference>
<dbReference type="PIR" id="B22786">
    <property type="entry name" value="B22786"/>
</dbReference>
<dbReference type="STRING" id="4932.YGL188C"/>
<dbReference type="PaxDb" id="4932-YGL188C"/>
<dbReference type="EnsemblFungi" id="YGL188C_mRNA">
    <property type="protein sequence ID" value="YGL188C"/>
    <property type="gene ID" value="YGL188C"/>
</dbReference>
<dbReference type="AGR" id="SGD:S000003156"/>
<dbReference type="SGD" id="S000003156">
    <property type="gene designation" value="YGL188C"/>
</dbReference>
<dbReference type="HOGENOM" id="CLU_2998232_0_0_1"/>
<dbReference type="ChiTaRS" id="YGL188C">
    <property type="organism name" value="yeast"/>
</dbReference>
<reference key="1">
    <citation type="journal article" date="1984" name="EMBO J.">
        <title>Subunit IV of yeast cytochrome c oxidase: cloning and nucleotide sequencing of the gene and partial amino acid sequencing of the mature protein.</title>
        <authorList>
            <person name="Maarse A.C."/>
            <person name="van Loon A.P.G.M."/>
            <person name="Riezman H."/>
            <person name="Gregor I."/>
            <person name="Schatz G."/>
            <person name="Grivell L.A."/>
        </authorList>
    </citation>
    <scope>NUCLEOTIDE SEQUENCE [GENOMIC DNA]</scope>
</reference>
<reference key="2">
    <citation type="journal article" date="1997" name="Yeast">
        <title>Sequencing of a 40.5 kb fragment located on the left arm of chromosome VII from Saccharomyces cerevisiae.</title>
        <authorList>
            <person name="Coglievina M."/>
            <person name="Klima R."/>
            <person name="Bertani I."/>
            <person name="Delneri D."/>
            <person name="Zaccaria P."/>
            <person name="Bruschi C.V."/>
        </authorList>
    </citation>
    <scope>NUCLEOTIDE SEQUENCE [GENOMIC DNA]</scope>
    <source>
        <strain>ATCC 96604 / S288c / FY1679</strain>
    </source>
</reference>
<reference key="3">
    <citation type="journal article" date="1997" name="Nature">
        <title>The nucleotide sequence of Saccharomyces cerevisiae chromosome VII.</title>
        <authorList>
            <person name="Tettelin H."/>
            <person name="Agostoni-Carbone M.L."/>
            <person name="Albermann K."/>
            <person name="Albers M."/>
            <person name="Arroyo J."/>
            <person name="Backes U."/>
            <person name="Barreiros T."/>
            <person name="Bertani I."/>
            <person name="Bjourson A.J."/>
            <person name="Brueckner M."/>
            <person name="Bruschi C.V."/>
            <person name="Carignani G."/>
            <person name="Castagnoli L."/>
            <person name="Cerdan E."/>
            <person name="Clemente M.L."/>
            <person name="Coblenz A."/>
            <person name="Coglievina M."/>
            <person name="Coissac E."/>
            <person name="Defoor E."/>
            <person name="Del Bino S."/>
            <person name="Delius H."/>
            <person name="Delneri D."/>
            <person name="de Wergifosse P."/>
            <person name="Dujon B."/>
            <person name="Durand P."/>
            <person name="Entian K.-D."/>
            <person name="Eraso P."/>
            <person name="Escribano V."/>
            <person name="Fabiani L."/>
            <person name="Fartmann B."/>
            <person name="Feroli F."/>
            <person name="Feuermann M."/>
            <person name="Frontali L."/>
            <person name="Garcia-Gonzalez M."/>
            <person name="Garcia-Saez M.I."/>
            <person name="Goffeau A."/>
            <person name="Guerreiro P."/>
            <person name="Hani J."/>
            <person name="Hansen M."/>
            <person name="Hebling U."/>
            <person name="Hernandez K."/>
            <person name="Heumann K."/>
            <person name="Hilger F."/>
            <person name="Hofmann B."/>
            <person name="Indge K.J."/>
            <person name="James C.M."/>
            <person name="Klima R."/>
            <person name="Koetter P."/>
            <person name="Kramer B."/>
            <person name="Kramer W."/>
            <person name="Lauquin G."/>
            <person name="Leuther H."/>
            <person name="Louis E.J."/>
            <person name="Maillier E."/>
            <person name="Marconi A."/>
            <person name="Martegani E."/>
            <person name="Mazon M.J."/>
            <person name="Mazzoni C."/>
            <person name="McReynolds A.D.K."/>
            <person name="Melchioretto P."/>
            <person name="Mewes H.-W."/>
            <person name="Minenkova O."/>
            <person name="Mueller-Auer S."/>
            <person name="Nawrocki A."/>
            <person name="Netter P."/>
            <person name="Neu R."/>
            <person name="Nombela C."/>
            <person name="Oliver S.G."/>
            <person name="Panzeri L."/>
            <person name="Paoluzi S."/>
            <person name="Plevani P."/>
            <person name="Portetelle D."/>
            <person name="Portillo F."/>
            <person name="Potier S."/>
            <person name="Purnelle B."/>
            <person name="Rieger M."/>
            <person name="Riles L."/>
            <person name="Rinaldi T."/>
            <person name="Robben J."/>
            <person name="Rodrigues-Pousada C."/>
            <person name="Rodriguez-Belmonte E."/>
            <person name="Rodriguez-Torres A.M."/>
            <person name="Rose M."/>
            <person name="Ruzzi M."/>
            <person name="Saliola M."/>
            <person name="Sanchez-Perez M."/>
            <person name="Schaefer B."/>
            <person name="Schaefer M."/>
            <person name="Scharfe M."/>
            <person name="Schmidheini T."/>
            <person name="Schreer A."/>
            <person name="Skala J."/>
            <person name="Souciet J.-L."/>
            <person name="Steensma H.Y."/>
            <person name="Talla E."/>
            <person name="Thierry A."/>
            <person name="Vandenbol M."/>
            <person name="van der Aart Q.J.M."/>
            <person name="Van Dyck L."/>
            <person name="Vanoni M."/>
            <person name="Verhasselt P."/>
            <person name="Voet M."/>
            <person name="Volckaert G."/>
            <person name="Wambutt R."/>
            <person name="Watson M.D."/>
            <person name="Weber N."/>
            <person name="Wedler E."/>
            <person name="Wedler H."/>
            <person name="Wipfli P."/>
            <person name="Wolf K."/>
            <person name="Wright L.F."/>
            <person name="Zaccaria P."/>
            <person name="Zimmermann M."/>
            <person name="Zollner A."/>
            <person name="Kleine K."/>
        </authorList>
    </citation>
    <scope>NUCLEOTIDE SEQUENCE [LARGE SCALE GENOMIC DNA]</scope>
    <source>
        <strain>ATCC 204508 / S288c</strain>
    </source>
</reference>
<reference key="4">
    <citation type="journal article" date="2014" name="G3 (Bethesda)">
        <title>The reference genome sequence of Saccharomyces cerevisiae: Then and now.</title>
        <authorList>
            <person name="Engel S.R."/>
            <person name="Dietrich F.S."/>
            <person name="Fisk D.G."/>
            <person name="Binkley G."/>
            <person name="Balakrishnan R."/>
            <person name="Costanzo M.C."/>
            <person name="Dwight S.S."/>
            <person name="Hitz B.C."/>
            <person name="Karra K."/>
            <person name="Nash R.S."/>
            <person name="Weng S."/>
            <person name="Wong E.D."/>
            <person name="Lloyd P."/>
            <person name="Skrzypek M.S."/>
            <person name="Miyasato S.R."/>
            <person name="Simison M."/>
            <person name="Cherry J.M."/>
        </authorList>
    </citation>
    <scope>GENOME REANNOTATION</scope>
    <source>
        <strain>ATCC 204508 / S288c</strain>
    </source>
</reference>
<accession>P53098</accession>
<gene>
    <name type="ordered locus">YGL188C</name>
</gene>
<organism>
    <name type="scientific">Saccharomyces cerevisiae (strain ATCC 204508 / S288c)</name>
    <name type="common">Baker's yeast</name>
    <dbReference type="NCBI Taxonomy" id="559292"/>
    <lineage>
        <taxon>Eukaryota</taxon>
        <taxon>Fungi</taxon>
        <taxon>Dikarya</taxon>
        <taxon>Ascomycota</taxon>
        <taxon>Saccharomycotina</taxon>
        <taxon>Saccharomycetes</taxon>
        <taxon>Saccharomycetales</taxon>
        <taxon>Saccharomycetaceae</taxon>
        <taxon>Saccharomyces</taxon>
    </lineage>
</organism>
<protein>
    <recommendedName>
        <fullName>Putative uncharacterized protein YGL188C</fullName>
    </recommendedName>
</protein>
<comment type="caution">
    <text evidence="1">Product of a dubious gene prediction unlikely to encode a functional protein. Because of that it is not part of the S.cerevisiae S288c complete/reference proteome set.</text>
</comment>